<protein>
    <recommendedName>
        <fullName evidence="1">tRNA (guanine-N(1)-)-methyltransferase</fullName>
        <ecNumber evidence="1">2.1.1.228</ecNumber>
    </recommendedName>
    <alternativeName>
        <fullName evidence="1">M1G-methyltransferase</fullName>
    </alternativeName>
    <alternativeName>
        <fullName evidence="1">tRNA [GM37] methyltransferase</fullName>
    </alternativeName>
</protein>
<proteinExistence type="inferred from homology"/>
<accession>B4RIW3</accession>
<organism>
    <name type="scientific">Neisseria gonorrhoeae (strain NCCP11945)</name>
    <dbReference type="NCBI Taxonomy" id="521006"/>
    <lineage>
        <taxon>Bacteria</taxon>
        <taxon>Pseudomonadati</taxon>
        <taxon>Pseudomonadota</taxon>
        <taxon>Betaproteobacteria</taxon>
        <taxon>Neisseriales</taxon>
        <taxon>Neisseriaceae</taxon>
        <taxon>Neisseria</taxon>
    </lineage>
</organism>
<gene>
    <name evidence="1" type="primary">trmD</name>
    <name type="ordered locus">NGK_0224</name>
</gene>
<comment type="function">
    <text evidence="1">Specifically methylates guanosine-37 in various tRNAs.</text>
</comment>
<comment type="catalytic activity">
    <reaction evidence="1">
        <text>guanosine(37) in tRNA + S-adenosyl-L-methionine = N(1)-methylguanosine(37) in tRNA + S-adenosyl-L-homocysteine + H(+)</text>
        <dbReference type="Rhea" id="RHEA:36899"/>
        <dbReference type="Rhea" id="RHEA-COMP:10145"/>
        <dbReference type="Rhea" id="RHEA-COMP:10147"/>
        <dbReference type="ChEBI" id="CHEBI:15378"/>
        <dbReference type="ChEBI" id="CHEBI:57856"/>
        <dbReference type="ChEBI" id="CHEBI:59789"/>
        <dbReference type="ChEBI" id="CHEBI:73542"/>
        <dbReference type="ChEBI" id="CHEBI:74269"/>
        <dbReference type="EC" id="2.1.1.228"/>
    </reaction>
</comment>
<comment type="subunit">
    <text evidence="1">Homodimer.</text>
</comment>
<comment type="subcellular location">
    <subcellularLocation>
        <location evidence="1">Cytoplasm</location>
    </subcellularLocation>
</comment>
<comment type="similarity">
    <text evidence="1">Belongs to the RNA methyltransferase TrmD family.</text>
</comment>
<name>TRMD_NEIG2</name>
<feature type="chain" id="PRO_1000130191" description="tRNA (guanine-N(1)-)-methyltransferase">
    <location>
        <begin position="1"/>
        <end position="249"/>
    </location>
</feature>
<feature type="binding site" evidence="1">
    <location>
        <position position="113"/>
    </location>
    <ligand>
        <name>S-adenosyl-L-methionine</name>
        <dbReference type="ChEBI" id="CHEBI:59789"/>
    </ligand>
</feature>
<feature type="binding site" evidence="1">
    <location>
        <begin position="133"/>
        <end position="138"/>
    </location>
    <ligand>
        <name>S-adenosyl-L-methionine</name>
        <dbReference type="ChEBI" id="CHEBI:59789"/>
    </ligand>
</feature>
<keyword id="KW-0963">Cytoplasm</keyword>
<keyword id="KW-0489">Methyltransferase</keyword>
<keyword id="KW-0949">S-adenosyl-L-methionine</keyword>
<keyword id="KW-0808">Transferase</keyword>
<keyword id="KW-0819">tRNA processing</keyword>
<reference key="1">
    <citation type="journal article" date="2008" name="J. Bacteriol.">
        <title>Complete genome sequence of Neisseria gonorrhoeae NCCP11945.</title>
        <authorList>
            <person name="Chung G.T."/>
            <person name="Yoo J.S."/>
            <person name="Oh H.B."/>
            <person name="Lee Y.S."/>
            <person name="Cha S.H."/>
            <person name="Kim S.J."/>
            <person name="Yoo C.K."/>
        </authorList>
    </citation>
    <scope>NUCLEOTIDE SEQUENCE [LARGE SCALE GENOMIC DNA]</scope>
    <source>
        <strain>NCCP11945</strain>
    </source>
</reference>
<sequence length="249" mass="27828">MLIQAVTIFPEMFDSITRYGVTGRANRQGIWQFEAVNPRKFADNRLGYIDDRPFGGGPGMIMMAPPLHAAIEHAKAQSSQTAKVIYLSPQGKPLTHQKAAELAELTHLILLCGRYEGIDERLLQSSVDEEISIGDFVVSGGELPAMMLMDAVLRLVPGILGDIQSAEQDSFSSGILDCPHYTKPLEFQGMAVPEVLRSGNHGLIAEWRLEQSLRRTLERRPDLLEKRVLIPKESRLLNKILQEQREIQS</sequence>
<dbReference type="EC" id="2.1.1.228" evidence="1"/>
<dbReference type="EMBL" id="CP001050">
    <property type="protein sequence ID" value="ACF28920.1"/>
    <property type="molecule type" value="Genomic_DNA"/>
</dbReference>
<dbReference type="RefSeq" id="WP_003687474.1">
    <property type="nucleotide sequence ID" value="NC_011035.1"/>
</dbReference>
<dbReference type="SMR" id="B4RIW3"/>
<dbReference type="GeneID" id="66752434"/>
<dbReference type="KEGG" id="ngk:NGK_0224"/>
<dbReference type="HOGENOM" id="CLU_047363_0_1_4"/>
<dbReference type="Proteomes" id="UP000002564">
    <property type="component" value="Chromosome"/>
</dbReference>
<dbReference type="GO" id="GO:0005829">
    <property type="term" value="C:cytosol"/>
    <property type="evidence" value="ECO:0007669"/>
    <property type="project" value="TreeGrafter"/>
</dbReference>
<dbReference type="GO" id="GO:0052906">
    <property type="term" value="F:tRNA (guanine(37)-N1)-methyltransferase activity"/>
    <property type="evidence" value="ECO:0007669"/>
    <property type="project" value="UniProtKB-UniRule"/>
</dbReference>
<dbReference type="GO" id="GO:0002939">
    <property type="term" value="P:tRNA N1-guanine methylation"/>
    <property type="evidence" value="ECO:0007669"/>
    <property type="project" value="TreeGrafter"/>
</dbReference>
<dbReference type="CDD" id="cd18080">
    <property type="entry name" value="TrmD-like"/>
    <property type="match status" value="1"/>
</dbReference>
<dbReference type="FunFam" id="1.10.1270.20:FF:000001">
    <property type="entry name" value="tRNA (guanine-N(1)-)-methyltransferase"/>
    <property type="match status" value="1"/>
</dbReference>
<dbReference type="FunFam" id="3.40.1280.10:FF:000001">
    <property type="entry name" value="tRNA (guanine-N(1)-)-methyltransferase"/>
    <property type="match status" value="1"/>
</dbReference>
<dbReference type="Gene3D" id="3.40.1280.10">
    <property type="match status" value="1"/>
</dbReference>
<dbReference type="Gene3D" id="1.10.1270.20">
    <property type="entry name" value="tRNA(m1g37)methyltransferase, domain 2"/>
    <property type="match status" value="1"/>
</dbReference>
<dbReference type="HAMAP" id="MF_00605">
    <property type="entry name" value="TrmD"/>
    <property type="match status" value="1"/>
</dbReference>
<dbReference type="InterPro" id="IPR029028">
    <property type="entry name" value="Alpha/beta_knot_MTases"/>
</dbReference>
<dbReference type="InterPro" id="IPR023148">
    <property type="entry name" value="tRNA_m1G_MeTrfase_C_sf"/>
</dbReference>
<dbReference type="InterPro" id="IPR002649">
    <property type="entry name" value="tRNA_m1G_MeTrfase_TrmD"/>
</dbReference>
<dbReference type="InterPro" id="IPR029026">
    <property type="entry name" value="tRNA_m1G_MTases_N"/>
</dbReference>
<dbReference type="InterPro" id="IPR016009">
    <property type="entry name" value="tRNA_MeTrfase_TRMD/TRM10"/>
</dbReference>
<dbReference type="NCBIfam" id="NF000648">
    <property type="entry name" value="PRK00026.1"/>
    <property type="match status" value="1"/>
</dbReference>
<dbReference type="NCBIfam" id="TIGR00088">
    <property type="entry name" value="trmD"/>
    <property type="match status" value="1"/>
</dbReference>
<dbReference type="PANTHER" id="PTHR46417">
    <property type="entry name" value="TRNA (GUANINE-N(1)-)-METHYLTRANSFERASE"/>
    <property type="match status" value="1"/>
</dbReference>
<dbReference type="PANTHER" id="PTHR46417:SF1">
    <property type="entry name" value="TRNA (GUANINE-N(1)-)-METHYLTRANSFERASE"/>
    <property type="match status" value="1"/>
</dbReference>
<dbReference type="Pfam" id="PF01746">
    <property type="entry name" value="tRNA_m1G_MT"/>
    <property type="match status" value="1"/>
</dbReference>
<dbReference type="PIRSF" id="PIRSF000386">
    <property type="entry name" value="tRNA_mtase"/>
    <property type="match status" value="1"/>
</dbReference>
<dbReference type="SUPFAM" id="SSF75217">
    <property type="entry name" value="alpha/beta knot"/>
    <property type="match status" value="1"/>
</dbReference>
<evidence type="ECO:0000255" key="1">
    <source>
        <dbReference type="HAMAP-Rule" id="MF_00605"/>
    </source>
</evidence>